<keyword id="KW-0067">ATP-binding</keyword>
<keyword id="KW-0963">Cytoplasm</keyword>
<keyword id="KW-0418">Kinase</keyword>
<keyword id="KW-0547">Nucleotide-binding</keyword>
<keyword id="KW-1185">Reference proteome</keyword>
<keyword id="KW-0808">Transferase</keyword>
<feature type="chain" id="PRO_1000048244" description="Cytidylate kinase">
    <location>
        <begin position="1"/>
        <end position="227"/>
    </location>
</feature>
<feature type="binding site" evidence="1">
    <location>
        <begin position="12"/>
        <end position="20"/>
    </location>
    <ligand>
        <name>ATP</name>
        <dbReference type="ChEBI" id="CHEBI:30616"/>
    </ligand>
</feature>
<reference key="1">
    <citation type="journal article" date="2006" name="Appl. Environ. Microbiol.">
        <title>Complete genome sequence of the marine, chemolithoautotrophic, ammonia-oxidizing bacterium Nitrosococcus oceani ATCC 19707.</title>
        <authorList>
            <person name="Klotz M.G."/>
            <person name="Arp D.J."/>
            <person name="Chain P.S.G."/>
            <person name="El-Sheikh A.F."/>
            <person name="Hauser L.J."/>
            <person name="Hommes N.G."/>
            <person name="Larimer F.W."/>
            <person name="Malfatti S.A."/>
            <person name="Norton J.M."/>
            <person name="Poret-Peterson A.T."/>
            <person name="Vergez L.M."/>
            <person name="Ward B.B."/>
        </authorList>
    </citation>
    <scope>NUCLEOTIDE SEQUENCE [LARGE SCALE GENOMIC DNA]</scope>
    <source>
        <strain>ATCC 19707 / BCRC 17464 / JCM 30415 / NCIMB 11848 / C-107</strain>
    </source>
</reference>
<proteinExistence type="inferred from homology"/>
<organism>
    <name type="scientific">Nitrosococcus oceani (strain ATCC 19707 / BCRC 17464 / JCM 30415 / NCIMB 11848 / C-107)</name>
    <dbReference type="NCBI Taxonomy" id="323261"/>
    <lineage>
        <taxon>Bacteria</taxon>
        <taxon>Pseudomonadati</taxon>
        <taxon>Pseudomonadota</taxon>
        <taxon>Gammaproteobacteria</taxon>
        <taxon>Chromatiales</taxon>
        <taxon>Chromatiaceae</taxon>
        <taxon>Nitrosococcus</taxon>
    </lineage>
</organism>
<protein>
    <recommendedName>
        <fullName evidence="1">Cytidylate kinase</fullName>
        <shortName evidence="1">CK</shortName>
        <ecNumber evidence="1">2.7.4.25</ecNumber>
    </recommendedName>
    <alternativeName>
        <fullName evidence="1">Cytidine monophosphate kinase</fullName>
        <shortName evidence="1">CMP kinase</shortName>
    </alternativeName>
</protein>
<gene>
    <name evidence="1" type="primary">cmk</name>
    <name type="ordered locus">Noc_0179</name>
</gene>
<sequence length="227" mass="24982">MSKEIPVITVDGPSGSGKGTLAQQLAQHLEWHYLDSGAMYRVLALAADKHGIAPNAPKQLETLAQNLDVRFISGLEGMPARVFLEGSEVSDSIRREECGNAASKIAALAEVRGALLMRQRAFRKAPGLVTDGRDMGTVVFPEADLKIFLTASPYERARRRYKQLKEKGIGANLKNLEKEIAERDRRDCERNIAPLKSADDAIILDSTNLAIKEVFQQVLPWLSGKNT</sequence>
<name>KCY_NITOC</name>
<dbReference type="EC" id="2.7.4.25" evidence="1"/>
<dbReference type="EMBL" id="CP000127">
    <property type="protein sequence ID" value="ABA56712.1"/>
    <property type="molecule type" value="Genomic_DNA"/>
</dbReference>
<dbReference type="RefSeq" id="WP_011330251.1">
    <property type="nucleotide sequence ID" value="NC_007484.1"/>
</dbReference>
<dbReference type="SMR" id="Q3JEN4"/>
<dbReference type="FunCoup" id="Q3JEN4">
    <property type="interactions" value="356"/>
</dbReference>
<dbReference type="STRING" id="323261.Noc_0179"/>
<dbReference type="KEGG" id="noc:Noc_0179"/>
<dbReference type="eggNOG" id="COG0283">
    <property type="taxonomic scope" value="Bacteria"/>
</dbReference>
<dbReference type="HOGENOM" id="CLU_079959_2_0_6"/>
<dbReference type="InParanoid" id="Q3JEN4"/>
<dbReference type="Proteomes" id="UP000006838">
    <property type="component" value="Chromosome"/>
</dbReference>
<dbReference type="GO" id="GO:0005829">
    <property type="term" value="C:cytosol"/>
    <property type="evidence" value="ECO:0007669"/>
    <property type="project" value="TreeGrafter"/>
</dbReference>
<dbReference type="GO" id="GO:0005524">
    <property type="term" value="F:ATP binding"/>
    <property type="evidence" value="ECO:0007669"/>
    <property type="project" value="UniProtKB-UniRule"/>
</dbReference>
<dbReference type="GO" id="GO:0036430">
    <property type="term" value="F:CMP kinase activity"/>
    <property type="evidence" value="ECO:0007669"/>
    <property type="project" value="RHEA"/>
</dbReference>
<dbReference type="GO" id="GO:0036431">
    <property type="term" value="F:dCMP kinase activity"/>
    <property type="evidence" value="ECO:0007669"/>
    <property type="project" value="RHEA"/>
</dbReference>
<dbReference type="GO" id="GO:0015949">
    <property type="term" value="P:nucleobase-containing small molecule interconversion"/>
    <property type="evidence" value="ECO:0007669"/>
    <property type="project" value="TreeGrafter"/>
</dbReference>
<dbReference type="GO" id="GO:0006220">
    <property type="term" value="P:pyrimidine nucleotide metabolic process"/>
    <property type="evidence" value="ECO:0007669"/>
    <property type="project" value="UniProtKB-UniRule"/>
</dbReference>
<dbReference type="CDD" id="cd02020">
    <property type="entry name" value="CMPK"/>
    <property type="match status" value="1"/>
</dbReference>
<dbReference type="Gene3D" id="3.40.50.300">
    <property type="entry name" value="P-loop containing nucleotide triphosphate hydrolases"/>
    <property type="match status" value="1"/>
</dbReference>
<dbReference type="HAMAP" id="MF_00238">
    <property type="entry name" value="Cytidyl_kinase_type1"/>
    <property type="match status" value="1"/>
</dbReference>
<dbReference type="InterPro" id="IPR003136">
    <property type="entry name" value="Cytidylate_kin"/>
</dbReference>
<dbReference type="InterPro" id="IPR011994">
    <property type="entry name" value="Cytidylate_kinase_dom"/>
</dbReference>
<dbReference type="InterPro" id="IPR027417">
    <property type="entry name" value="P-loop_NTPase"/>
</dbReference>
<dbReference type="NCBIfam" id="TIGR00017">
    <property type="entry name" value="cmk"/>
    <property type="match status" value="1"/>
</dbReference>
<dbReference type="PANTHER" id="PTHR21299:SF2">
    <property type="entry name" value="CYTIDYLATE KINASE"/>
    <property type="match status" value="1"/>
</dbReference>
<dbReference type="PANTHER" id="PTHR21299">
    <property type="entry name" value="CYTIDYLATE KINASE/PANTOATE-BETA-ALANINE LIGASE"/>
    <property type="match status" value="1"/>
</dbReference>
<dbReference type="Pfam" id="PF02224">
    <property type="entry name" value="Cytidylate_kin"/>
    <property type="match status" value="1"/>
</dbReference>
<dbReference type="SUPFAM" id="SSF52540">
    <property type="entry name" value="P-loop containing nucleoside triphosphate hydrolases"/>
    <property type="match status" value="1"/>
</dbReference>
<comment type="catalytic activity">
    <reaction evidence="1">
        <text>CMP + ATP = CDP + ADP</text>
        <dbReference type="Rhea" id="RHEA:11600"/>
        <dbReference type="ChEBI" id="CHEBI:30616"/>
        <dbReference type="ChEBI" id="CHEBI:58069"/>
        <dbReference type="ChEBI" id="CHEBI:60377"/>
        <dbReference type="ChEBI" id="CHEBI:456216"/>
        <dbReference type="EC" id="2.7.4.25"/>
    </reaction>
</comment>
<comment type="catalytic activity">
    <reaction evidence="1">
        <text>dCMP + ATP = dCDP + ADP</text>
        <dbReference type="Rhea" id="RHEA:25094"/>
        <dbReference type="ChEBI" id="CHEBI:30616"/>
        <dbReference type="ChEBI" id="CHEBI:57566"/>
        <dbReference type="ChEBI" id="CHEBI:58593"/>
        <dbReference type="ChEBI" id="CHEBI:456216"/>
        <dbReference type="EC" id="2.7.4.25"/>
    </reaction>
</comment>
<comment type="subcellular location">
    <subcellularLocation>
        <location evidence="1">Cytoplasm</location>
    </subcellularLocation>
</comment>
<comment type="similarity">
    <text evidence="1">Belongs to the cytidylate kinase family. Type 1 subfamily.</text>
</comment>
<evidence type="ECO:0000255" key="1">
    <source>
        <dbReference type="HAMAP-Rule" id="MF_00238"/>
    </source>
</evidence>
<accession>Q3JEN4</accession>